<accession>Q3K011</accession>
<organism>
    <name type="scientific">Streptococcus agalactiae serotype Ia (strain ATCC 27591 / A909 / CDC SS700)</name>
    <dbReference type="NCBI Taxonomy" id="205921"/>
    <lineage>
        <taxon>Bacteria</taxon>
        <taxon>Bacillati</taxon>
        <taxon>Bacillota</taxon>
        <taxon>Bacilli</taxon>
        <taxon>Lactobacillales</taxon>
        <taxon>Streptococcaceae</taxon>
        <taxon>Streptococcus</taxon>
    </lineage>
</organism>
<name>RRF_STRA1</name>
<dbReference type="EMBL" id="CP000114">
    <property type="protein sequence ID" value="ABA46205.1"/>
    <property type="molecule type" value="Genomic_DNA"/>
</dbReference>
<dbReference type="RefSeq" id="WP_000159519.1">
    <property type="nucleotide sequence ID" value="NC_007432.1"/>
</dbReference>
<dbReference type="SMR" id="Q3K011"/>
<dbReference type="GeneID" id="66886367"/>
<dbReference type="KEGG" id="sak:SAK_1536"/>
<dbReference type="HOGENOM" id="CLU_073981_2_0_9"/>
<dbReference type="GO" id="GO:0005737">
    <property type="term" value="C:cytoplasm"/>
    <property type="evidence" value="ECO:0007669"/>
    <property type="project" value="UniProtKB-SubCell"/>
</dbReference>
<dbReference type="GO" id="GO:0043023">
    <property type="term" value="F:ribosomal large subunit binding"/>
    <property type="evidence" value="ECO:0007669"/>
    <property type="project" value="TreeGrafter"/>
</dbReference>
<dbReference type="GO" id="GO:0006415">
    <property type="term" value="P:translational termination"/>
    <property type="evidence" value="ECO:0007669"/>
    <property type="project" value="UniProtKB-UniRule"/>
</dbReference>
<dbReference type="CDD" id="cd00520">
    <property type="entry name" value="RRF"/>
    <property type="match status" value="1"/>
</dbReference>
<dbReference type="FunFam" id="1.10.132.20:FF:000001">
    <property type="entry name" value="Ribosome-recycling factor"/>
    <property type="match status" value="1"/>
</dbReference>
<dbReference type="FunFam" id="3.30.1360.40:FF:000001">
    <property type="entry name" value="Ribosome-recycling factor"/>
    <property type="match status" value="1"/>
</dbReference>
<dbReference type="Gene3D" id="3.30.1360.40">
    <property type="match status" value="1"/>
</dbReference>
<dbReference type="Gene3D" id="1.10.132.20">
    <property type="entry name" value="Ribosome-recycling factor"/>
    <property type="match status" value="1"/>
</dbReference>
<dbReference type="HAMAP" id="MF_00040">
    <property type="entry name" value="RRF"/>
    <property type="match status" value="1"/>
</dbReference>
<dbReference type="InterPro" id="IPR002661">
    <property type="entry name" value="Ribosome_recyc_fac"/>
</dbReference>
<dbReference type="InterPro" id="IPR023584">
    <property type="entry name" value="Ribosome_recyc_fac_dom"/>
</dbReference>
<dbReference type="InterPro" id="IPR036191">
    <property type="entry name" value="RRF_sf"/>
</dbReference>
<dbReference type="NCBIfam" id="TIGR00496">
    <property type="entry name" value="frr"/>
    <property type="match status" value="1"/>
</dbReference>
<dbReference type="PANTHER" id="PTHR20982:SF3">
    <property type="entry name" value="MITOCHONDRIAL RIBOSOME RECYCLING FACTOR PSEUDO 1"/>
    <property type="match status" value="1"/>
</dbReference>
<dbReference type="PANTHER" id="PTHR20982">
    <property type="entry name" value="RIBOSOME RECYCLING FACTOR"/>
    <property type="match status" value="1"/>
</dbReference>
<dbReference type="Pfam" id="PF01765">
    <property type="entry name" value="RRF"/>
    <property type="match status" value="1"/>
</dbReference>
<dbReference type="SUPFAM" id="SSF55194">
    <property type="entry name" value="Ribosome recycling factor, RRF"/>
    <property type="match status" value="1"/>
</dbReference>
<proteinExistence type="inferred from homology"/>
<gene>
    <name evidence="1" type="primary">frr</name>
    <name type="ordered locus">SAK_1536</name>
</gene>
<protein>
    <recommendedName>
        <fullName evidence="1">Ribosome-recycling factor</fullName>
        <shortName evidence="1">RRF</shortName>
    </recommendedName>
    <alternativeName>
        <fullName evidence="1">Ribosome-releasing factor</fullName>
    </alternativeName>
</protein>
<evidence type="ECO:0000255" key="1">
    <source>
        <dbReference type="HAMAP-Rule" id="MF_00040"/>
    </source>
</evidence>
<reference key="1">
    <citation type="journal article" date="2005" name="Proc. Natl. Acad. Sci. U.S.A.">
        <title>Genome analysis of multiple pathogenic isolates of Streptococcus agalactiae: implications for the microbial 'pan-genome'.</title>
        <authorList>
            <person name="Tettelin H."/>
            <person name="Masignani V."/>
            <person name="Cieslewicz M.J."/>
            <person name="Donati C."/>
            <person name="Medini D."/>
            <person name="Ward N.L."/>
            <person name="Angiuoli S.V."/>
            <person name="Crabtree J."/>
            <person name="Jones A.L."/>
            <person name="Durkin A.S."/>
            <person name="DeBoy R.T."/>
            <person name="Davidsen T.M."/>
            <person name="Mora M."/>
            <person name="Scarselli M."/>
            <person name="Margarit y Ros I."/>
            <person name="Peterson J.D."/>
            <person name="Hauser C.R."/>
            <person name="Sundaram J.P."/>
            <person name="Nelson W.C."/>
            <person name="Madupu R."/>
            <person name="Brinkac L.M."/>
            <person name="Dodson R.J."/>
            <person name="Rosovitz M.J."/>
            <person name="Sullivan S.A."/>
            <person name="Daugherty S.C."/>
            <person name="Haft D.H."/>
            <person name="Selengut J."/>
            <person name="Gwinn M.L."/>
            <person name="Zhou L."/>
            <person name="Zafar N."/>
            <person name="Khouri H."/>
            <person name="Radune D."/>
            <person name="Dimitrov G."/>
            <person name="Watkins K."/>
            <person name="O'Connor K.J."/>
            <person name="Smith S."/>
            <person name="Utterback T.R."/>
            <person name="White O."/>
            <person name="Rubens C.E."/>
            <person name="Grandi G."/>
            <person name="Madoff L.C."/>
            <person name="Kasper D.L."/>
            <person name="Telford J.L."/>
            <person name="Wessels M.R."/>
            <person name="Rappuoli R."/>
            <person name="Fraser C.M."/>
        </authorList>
    </citation>
    <scope>NUCLEOTIDE SEQUENCE [LARGE SCALE GENOMIC DNA]</scope>
    <source>
        <strain>ATCC 27591 / A909 / CDC SS700</strain>
    </source>
</reference>
<comment type="function">
    <text evidence="1">Responsible for the release of ribosomes from messenger RNA at the termination of protein biosynthesis. May increase the efficiency of translation by recycling ribosomes from one round of translation to another.</text>
</comment>
<comment type="subcellular location">
    <subcellularLocation>
        <location evidence="1">Cytoplasm</location>
    </subcellularLocation>
</comment>
<comment type="similarity">
    <text evidence="1">Belongs to the RRF family.</text>
</comment>
<feature type="chain" id="PRO_1000003281" description="Ribosome-recycling factor">
    <location>
        <begin position="1"/>
        <end position="185"/>
    </location>
</feature>
<keyword id="KW-0963">Cytoplasm</keyword>
<keyword id="KW-0648">Protein biosynthesis</keyword>
<sequence length="185" mass="20794">MTKEIVTKAQERFEQSHQSLSREFAGIRAGRANASLLDRIQVEYYGAPTPLNQLASITVPEARVLLISPFDKSSIKDIERAINESDLGINPANDGSVIRLVIPALTEETRRDLAKEVKKVGENAKIAIRNIRRDAMDEAKKQEKNKEITEDDLKSLEKDIQKATDDAVKHIDEMTANKEKELLEV</sequence>